<sequence length="214" mass="24783">MSEREYFVEMDVRSVEAYELAKEWFDEVVFTKKLILDTEPDWDSLKEELRELRRTYGKVAVLLVTRKPSLIRTFKARNLKALLYVQGGDMRVNRMAIEAKVDALISPWLGRKDYGFDHTLAGMAGRRGVAIGFSLSPLLRANPYERALTLRFMAKVWELVRKYRVPRFITSSAESKWEVRGPRDLMSLGINIGMEIPEARASLNFHPRSLLSRL</sequence>
<proteinExistence type="inferred from homology"/>
<accession>C5A1N9</accession>
<reference key="1">
    <citation type="journal article" date="2007" name="Genome Biol.">
        <title>Genome analysis and genome-wide proteomics of Thermococcus gammatolerans, the most radioresistant organism known amongst the Archaea.</title>
        <authorList>
            <person name="Zivanovic Y."/>
            <person name="Armengaud J."/>
            <person name="Lagorce A."/>
            <person name="Leplat C."/>
            <person name="Guerin P."/>
            <person name="Dutertre M."/>
            <person name="Anthouard V."/>
            <person name="Forterre P."/>
            <person name="Wincker P."/>
            <person name="Confalonieri F."/>
        </authorList>
    </citation>
    <scope>NUCLEOTIDE SEQUENCE [LARGE SCALE GENOMIC DNA]</scope>
    <source>
        <strain>DSM 15229 / JCM 11827 / EJ3</strain>
    </source>
</reference>
<comment type="function">
    <text evidence="1">Part of ribonuclease P, a protein complex that generates mature tRNA molecules by cleaving their 5'-ends.</text>
</comment>
<comment type="catalytic activity">
    <reaction evidence="1">
        <text>Endonucleolytic cleavage of RNA, removing 5'-extranucleotides from tRNA precursor.</text>
        <dbReference type="EC" id="3.1.26.5"/>
    </reaction>
</comment>
<comment type="subunit">
    <text evidence="1">Consists of a catalytic RNA component and at least 4-5 protein subunits.</text>
</comment>
<comment type="subcellular location">
    <subcellularLocation>
        <location evidence="1">Cytoplasm</location>
    </subcellularLocation>
</comment>
<comment type="similarity">
    <text evidence="1">Belongs to the eukaryotic/archaeal RNase P protein component 3 family.</text>
</comment>
<feature type="chain" id="PRO_1000212861" description="Ribonuclease P protein component 3">
    <location>
        <begin position="1"/>
        <end position="214"/>
    </location>
</feature>
<evidence type="ECO:0000255" key="1">
    <source>
        <dbReference type="HAMAP-Rule" id="MF_00756"/>
    </source>
</evidence>
<name>RNP3_THEGJ</name>
<protein>
    <recommendedName>
        <fullName evidence="1">Ribonuclease P protein component 3</fullName>
        <shortName evidence="1">RNase P component 3</shortName>
        <ecNumber evidence="1">3.1.26.5</ecNumber>
    </recommendedName>
    <alternativeName>
        <fullName evidence="1">Rpp30</fullName>
    </alternativeName>
</protein>
<gene>
    <name evidence="1" type="primary">rnp3</name>
    <name type="ordered locus">TGAM_1806</name>
</gene>
<organism>
    <name type="scientific">Thermococcus gammatolerans (strain DSM 15229 / JCM 11827 / EJ3)</name>
    <dbReference type="NCBI Taxonomy" id="593117"/>
    <lineage>
        <taxon>Archaea</taxon>
        <taxon>Methanobacteriati</taxon>
        <taxon>Methanobacteriota</taxon>
        <taxon>Thermococci</taxon>
        <taxon>Thermococcales</taxon>
        <taxon>Thermococcaceae</taxon>
        <taxon>Thermococcus</taxon>
    </lineage>
</organism>
<keyword id="KW-0963">Cytoplasm</keyword>
<keyword id="KW-0255">Endonuclease</keyword>
<keyword id="KW-0378">Hydrolase</keyword>
<keyword id="KW-0540">Nuclease</keyword>
<keyword id="KW-1185">Reference proteome</keyword>
<keyword id="KW-0819">tRNA processing</keyword>
<dbReference type="EC" id="3.1.26.5" evidence="1"/>
<dbReference type="EMBL" id="CP001398">
    <property type="protein sequence ID" value="ACS34308.1"/>
    <property type="molecule type" value="Genomic_DNA"/>
</dbReference>
<dbReference type="RefSeq" id="WP_015859417.1">
    <property type="nucleotide sequence ID" value="NC_012804.1"/>
</dbReference>
<dbReference type="SMR" id="C5A1N9"/>
<dbReference type="STRING" id="593117.TGAM_1806"/>
<dbReference type="PaxDb" id="593117-TGAM_1806"/>
<dbReference type="GeneID" id="7987633"/>
<dbReference type="KEGG" id="tga:TGAM_1806"/>
<dbReference type="PATRIC" id="fig|593117.10.peg.1815"/>
<dbReference type="eggNOG" id="arCOG00307">
    <property type="taxonomic scope" value="Archaea"/>
</dbReference>
<dbReference type="HOGENOM" id="CLU_1302679_0_0_2"/>
<dbReference type="OrthoDB" id="85765at2157"/>
<dbReference type="Proteomes" id="UP000001488">
    <property type="component" value="Chromosome"/>
</dbReference>
<dbReference type="GO" id="GO:0005737">
    <property type="term" value="C:cytoplasm"/>
    <property type="evidence" value="ECO:0007669"/>
    <property type="project" value="UniProtKB-SubCell"/>
</dbReference>
<dbReference type="GO" id="GO:0030677">
    <property type="term" value="C:ribonuclease P complex"/>
    <property type="evidence" value="ECO:0007669"/>
    <property type="project" value="UniProtKB-UniRule"/>
</dbReference>
<dbReference type="GO" id="GO:0004526">
    <property type="term" value="F:ribonuclease P activity"/>
    <property type="evidence" value="ECO:0007669"/>
    <property type="project" value="UniProtKB-UniRule"/>
</dbReference>
<dbReference type="GO" id="GO:0001682">
    <property type="term" value="P:tRNA 5'-leader removal"/>
    <property type="evidence" value="ECO:0007669"/>
    <property type="project" value="UniProtKB-UniRule"/>
</dbReference>
<dbReference type="Gene3D" id="3.20.20.140">
    <property type="entry name" value="Metal-dependent hydrolases"/>
    <property type="match status" value="1"/>
</dbReference>
<dbReference type="HAMAP" id="MF_00756">
    <property type="entry name" value="RNase_P_3"/>
    <property type="match status" value="1"/>
</dbReference>
<dbReference type="InterPro" id="IPR016195">
    <property type="entry name" value="Pol/histidinol_Pase-like"/>
</dbReference>
<dbReference type="InterPro" id="IPR023539">
    <property type="entry name" value="RNase_P_comp-3_arc"/>
</dbReference>
<dbReference type="InterPro" id="IPR002738">
    <property type="entry name" value="RNase_P_p30"/>
</dbReference>
<dbReference type="NCBIfam" id="NF003023">
    <property type="entry name" value="PRK03892.1"/>
    <property type="match status" value="1"/>
</dbReference>
<dbReference type="Pfam" id="PF01876">
    <property type="entry name" value="RNase_P_p30"/>
    <property type="match status" value="1"/>
</dbReference>
<dbReference type="SUPFAM" id="SSF89550">
    <property type="entry name" value="PHP domain-like"/>
    <property type="match status" value="1"/>
</dbReference>